<gene>
    <name type="primary">Defb2</name>
</gene>
<evidence type="ECO:0000250" key="1"/>
<evidence type="ECO:0000255" key="2"/>
<evidence type="ECO:0000269" key="3">
    <source>
    </source>
</evidence>
<evidence type="ECO:0000305" key="4"/>
<sequence length="71" mass="7820">MRTLCSLLLICCLLFSYTTPAVGSLKSIGYEAELDHCHTNGGYCVRAICPPSARRPGSCFPEKNPCCKYMK</sequence>
<organism>
    <name type="scientific">Mus musculus</name>
    <name type="common">Mouse</name>
    <dbReference type="NCBI Taxonomy" id="10090"/>
    <lineage>
        <taxon>Eukaryota</taxon>
        <taxon>Metazoa</taxon>
        <taxon>Chordata</taxon>
        <taxon>Craniata</taxon>
        <taxon>Vertebrata</taxon>
        <taxon>Euteleostomi</taxon>
        <taxon>Mammalia</taxon>
        <taxon>Eutheria</taxon>
        <taxon>Euarchontoglires</taxon>
        <taxon>Glires</taxon>
        <taxon>Rodentia</taxon>
        <taxon>Myomorpha</taxon>
        <taxon>Muroidea</taxon>
        <taxon>Muridae</taxon>
        <taxon>Murinae</taxon>
        <taxon>Mus</taxon>
        <taxon>Mus</taxon>
    </lineage>
</organism>
<dbReference type="EMBL" id="AJ011800">
    <property type="protein sequence ID" value="CAB42815.1"/>
    <property type="molecule type" value="mRNA"/>
</dbReference>
<dbReference type="CCDS" id="CCDS40284.1"/>
<dbReference type="RefSeq" id="NP_034160.1">
    <property type="nucleotide sequence ID" value="NM_010030.2"/>
</dbReference>
<dbReference type="SMR" id="P82020"/>
<dbReference type="BioGRID" id="199090">
    <property type="interactions" value="1"/>
</dbReference>
<dbReference type="FunCoup" id="P82020">
    <property type="interactions" value="34"/>
</dbReference>
<dbReference type="STRING" id="10090.ENSMUSP00000006745"/>
<dbReference type="PaxDb" id="10090-ENSMUSP00000006745"/>
<dbReference type="ProteomicsDB" id="279365"/>
<dbReference type="DNASU" id="13215"/>
<dbReference type="Ensembl" id="ENSMUST00000006745.4">
    <property type="protein sequence ID" value="ENSMUSP00000006745.4"/>
    <property type="gene ID" value="ENSMUSG00000006570.4"/>
</dbReference>
<dbReference type="GeneID" id="13215"/>
<dbReference type="KEGG" id="mmu:13215"/>
<dbReference type="UCSC" id="uc009lca.1">
    <property type="organism name" value="mouse"/>
</dbReference>
<dbReference type="AGR" id="MGI:1338754"/>
<dbReference type="CTD" id="13215"/>
<dbReference type="MGI" id="MGI:1338754">
    <property type="gene designation" value="Defb2"/>
</dbReference>
<dbReference type="VEuPathDB" id="HostDB:ENSMUSG00000006570"/>
<dbReference type="GeneTree" id="ENSGT00940000165558"/>
<dbReference type="HOGENOM" id="CLU_189296_1_0_1"/>
<dbReference type="InParanoid" id="P82020"/>
<dbReference type="OMA" id="ELDHCHT"/>
<dbReference type="OrthoDB" id="9620198at2759"/>
<dbReference type="PhylomeDB" id="P82020"/>
<dbReference type="BioGRID-ORCS" id="13215">
    <property type="hits" value="2 hits in 76 CRISPR screens"/>
</dbReference>
<dbReference type="ChiTaRS" id="Defb2">
    <property type="organism name" value="mouse"/>
</dbReference>
<dbReference type="PRO" id="PR:P82020"/>
<dbReference type="Proteomes" id="UP000000589">
    <property type="component" value="Chromosome 8"/>
</dbReference>
<dbReference type="RNAct" id="P82020">
    <property type="molecule type" value="protein"/>
</dbReference>
<dbReference type="Bgee" id="ENSMUSG00000006570">
    <property type="expression patterns" value="Expressed in lobe of prostate and 32 other cell types or tissues"/>
</dbReference>
<dbReference type="ExpressionAtlas" id="P82020">
    <property type="expression patterns" value="baseline and differential"/>
</dbReference>
<dbReference type="GO" id="GO:0005576">
    <property type="term" value="C:extracellular region"/>
    <property type="evidence" value="ECO:0007669"/>
    <property type="project" value="UniProtKB-SubCell"/>
</dbReference>
<dbReference type="GO" id="GO:0042742">
    <property type="term" value="P:defense response to bacterium"/>
    <property type="evidence" value="ECO:0000315"/>
    <property type="project" value="MGI"/>
</dbReference>
<dbReference type="InterPro" id="IPR001855">
    <property type="entry name" value="Defensin_beta-like"/>
</dbReference>
<dbReference type="PANTHER" id="PTHR21388:SF4">
    <property type="entry name" value="BETA-DEFENSIN 10-RELATED"/>
    <property type="match status" value="1"/>
</dbReference>
<dbReference type="PANTHER" id="PTHR21388">
    <property type="entry name" value="BETA-DEFENSIN-RELATED"/>
    <property type="match status" value="1"/>
</dbReference>
<dbReference type="Pfam" id="PF00711">
    <property type="entry name" value="Defensin_beta"/>
    <property type="match status" value="1"/>
</dbReference>
<dbReference type="SUPFAM" id="SSF57392">
    <property type="entry name" value="Defensin-like"/>
    <property type="match status" value="1"/>
</dbReference>
<reference key="1">
    <citation type="journal article" date="1999" name="FEBS Lett.">
        <title>A novel mouse beta defensin, Defb2, which is upregulated in the airways by lipopolysaccharide.</title>
        <authorList>
            <person name="Morrison G.M."/>
            <person name="Davidson D.J."/>
            <person name="Dorin J.R."/>
        </authorList>
    </citation>
    <scope>NUCLEOTIDE SEQUENCE [MRNA]</scope>
    <scope>TISSUE SPECIFICITY</scope>
    <scope>INDUCTION</scope>
    <source>
        <strain>C57BL/6N</strain>
        <tissue>Kidney</tissue>
    </source>
</reference>
<protein>
    <recommendedName>
        <fullName>Beta-defensin 2</fullName>
        <shortName>BD-2</shortName>
        <shortName>mBD-2</shortName>
    </recommendedName>
    <alternativeName>
        <fullName>Defensin, beta 2</fullName>
    </alternativeName>
</protein>
<proteinExistence type="evidence at transcript level"/>
<name>DEFB2_MOUSE</name>
<accession>P82020</accession>
<feature type="signal peptide" evidence="2">
    <location>
        <begin position="1"/>
        <end position="20"/>
    </location>
</feature>
<feature type="peptide" id="PRO_0000006927" description="Beta-defensin 2">
    <location>
        <begin position="21"/>
        <end position="71"/>
    </location>
</feature>
<feature type="disulfide bond" evidence="1">
    <location>
        <begin position="37"/>
        <end position="66"/>
    </location>
</feature>
<feature type="disulfide bond" evidence="1">
    <location>
        <begin position="44"/>
        <end position="59"/>
    </location>
</feature>
<feature type="disulfide bond" evidence="1">
    <location>
        <begin position="49"/>
        <end position="67"/>
    </location>
</feature>
<keyword id="KW-0044">Antibiotic</keyword>
<keyword id="KW-0929">Antimicrobial</keyword>
<keyword id="KW-0211">Defensin</keyword>
<keyword id="KW-1015">Disulfide bond</keyword>
<keyword id="KW-1185">Reference proteome</keyword>
<keyword id="KW-0964">Secreted</keyword>
<keyword id="KW-0732">Signal</keyword>
<comment type="function">
    <text evidence="1">Has bactericidal activity.</text>
</comment>
<comment type="subcellular location">
    <subcellularLocation>
        <location evidence="1">Secreted</location>
    </subcellularLocation>
</comment>
<comment type="tissue specificity">
    <text evidence="3">Kidney, uterus and to a lesser extent in heart.</text>
</comment>
<comment type="induction">
    <text evidence="3">In tracheal epithelium, by lipopolysaccharide or inflammation.</text>
</comment>
<comment type="similarity">
    <text evidence="4">Belongs to the beta-defensin family.</text>
</comment>